<comment type="function">
    <text evidence="1 2">Catalyzes the dephosphorylation of an unusually broad range of substrate including deoxyribo- and ribonucleoside tri-, di-, and monophosphates, as well as polyphosphate and glucose-1-P (Glu1P).</text>
</comment>
<comment type="catalytic activity">
    <reaction evidence="1">
        <text>a ribonucleoside 5'-phosphate + H2O = a ribonucleoside + phosphate</text>
        <dbReference type="Rhea" id="RHEA:12484"/>
        <dbReference type="ChEBI" id="CHEBI:15377"/>
        <dbReference type="ChEBI" id="CHEBI:18254"/>
        <dbReference type="ChEBI" id="CHEBI:43474"/>
        <dbReference type="ChEBI" id="CHEBI:58043"/>
        <dbReference type="EC" id="3.1.3.5"/>
    </reaction>
</comment>
<comment type="cofactor">
    <cofactor evidence="1 2">
        <name>Mg(2+)</name>
        <dbReference type="ChEBI" id="CHEBI:18420"/>
    </cofactor>
    <cofactor evidence="1 2">
        <name>Mn(2+)</name>
        <dbReference type="ChEBI" id="CHEBI:29035"/>
    </cofactor>
    <cofactor evidence="1 2">
        <name>Co(2+)</name>
        <dbReference type="ChEBI" id="CHEBI:48828"/>
    </cofactor>
    <cofactor evidence="1 2">
        <name>Zn(2+)</name>
        <dbReference type="ChEBI" id="CHEBI:29105"/>
    </cofactor>
    <text evidence="1 2">Magnesium. Can also use other divalent metal cations as manganese, cobalt or zinc.</text>
</comment>
<comment type="biophysicochemical properties">
    <kinetics>
        <KM evidence="1">160 uM for UMP (at pH 7 and at 25 degrees Celsius)</KM>
        <KM evidence="1">400 uM for GMP (at pH 7 and at 25 degrees Celsius)</KM>
        <KM evidence="1">840 uM for AMP (at pH 7 and at 25 degrees Celsius)</KM>
        <KM evidence="1">840 uM for ribose-5-phosphate (at pH 7 and at 25 degrees Celsius)</KM>
        <KM evidence="1">1470 uM for CMP (at pH 7 and at 25 degrees Celsius)</KM>
        <KM evidence="1">1500 uM for dTMP (at pH 7 and at 25 degrees Celsius)</KM>
        <KM evidence="1">1500 uM for pyridoxal 5-phosphate (at pH 7 and at 25 degrees Celsius)</KM>
        <KM evidence="1">1700 uM for glycerol 3-phosphate (at pH 7 and at 25 degrees Celsius)</KM>
        <KM evidence="1">5900 uM for glucose 6-phosphate (at pH 7 and at 25 degrees Celsius)</KM>
        <KM evidence="1">6000 uM for glucosamine 6-phosphate (at pH 7 and at 25 degrees Celsius)</KM>
        <KM evidence="1">6000 uM for dCMP (at pH 7 and at 25 degrees Celsius)</KM>
        <KM evidence="1">6500 uM for dAMP (at pH 7 and at 25 degrees Celsius)</KM>
        <KM evidence="1">7600 uM for dGMP (at pH 7 and at 25 degrees Celsius)</KM>
        <KM evidence="1">7700 uM for dGMP (at pH 7 and at 25 degrees Celsius)</KM>
    </kinetics>
</comment>
<comment type="subunit">
    <text evidence="1">Monomer.</text>
</comment>
<comment type="induction">
    <text evidence="3">By N-acetylglucosamine.</text>
</comment>
<comment type="similarity">
    <text evidence="3">Belongs to the HAD-like hydrolase superfamily. NagD family.</text>
</comment>
<sequence>MTIKNVICDIDGVLMHDNVAVPGAAEFLHGIMDKGLPLVLLTNYPSQTGQDLANRFATAGVDVPDSVFYTSAMATADFLRRQEGKKAYVVGEGALIHELYKAGFTITDVNPDFVIVGETRSYNWDMMHKAAYFVANGARFIATNPDTHGRGFYPACGALCAGIEKISGRKPFYVGKPSPWIIRAALNKMQAHSEETVIVGDNLRTDILAGFQAGLETILVLSGVSSLDDIDSMPFRPSWIYPSVAEIDVI</sequence>
<proteinExistence type="evidence at protein level"/>
<feature type="chain" id="PRO_0000096694" description="Ribonucleotide monophosphatase NagD">
    <location>
        <begin position="1"/>
        <end position="250"/>
    </location>
</feature>
<feature type="active site" description="Nucleophile" evidence="4">
    <location>
        <position position="9"/>
    </location>
</feature>
<feature type="active site" description="Proton donor/acceptor" evidence="4">
    <location>
        <position position="11"/>
    </location>
</feature>
<feature type="binding site" evidence="1 5">
    <location>
        <position position="9"/>
    </location>
    <ligand>
        <name>Mg(2+)</name>
        <dbReference type="ChEBI" id="CHEBI:18420"/>
    </ligand>
</feature>
<feature type="binding site" evidence="1 5">
    <location>
        <position position="11"/>
    </location>
    <ligand>
        <name>Mg(2+)</name>
        <dbReference type="ChEBI" id="CHEBI:18420"/>
    </ligand>
</feature>
<feature type="binding site">
    <location>
        <position position="11"/>
    </location>
    <ligand>
        <name>substrate</name>
    </ligand>
</feature>
<feature type="binding site">
    <location>
        <begin position="42"/>
        <end position="43"/>
    </location>
    <ligand>
        <name>substrate</name>
    </ligand>
</feature>
<feature type="binding site">
    <location>
        <position position="176"/>
    </location>
    <ligand>
        <name>substrate</name>
    </ligand>
</feature>
<feature type="binding site" evidence="1 5">
    <location>
        <position position="201"/>
    </location>
    <ligand>
        <name>Mg(2+)</name>
        <dbReference type="ChEBI" id="CHEBI:18420"/>
    </ligand>
</feature>
<feature type="binding site">
    <location>
        <begin position="202"/>
        <end position="205"/>
    </location>
    <ligand>
        <name>substrate</name>
    </ligand>
</feature>
<feature type="site" description="Orients D-11 for proton transfer during catalytic turnover" evidence="4">
    <location>
        <position position="55"/>
    </location>
</feature>
<feature type="site" description="Confers substrate specificity">
    <location>
        <position position="146"/>
    </location>
</feature>
<feature type="sequence conflict" description="In Ref. 2; AAC09327." evidence="3" ref="2">
    <original>H</original>
    <variation>Y</variation>
    <location>
        <position position="97"/>
    </location>
</feature>
<feature type="strand" evidence="6">
    <location>
        <begin position="5"/>
        <end position="9"/>
    </location>
</feature>
<feature type="turn" evidence="6">
    <location>
        <begin position="12"/>
        <end position="14"/>
    </location>
</feature>
<feature type="helix" evidence="6">
    <location>
        <begin position="24"/>
        <end position="33"/>
    </location>
</feature>
<feature type="strand" evidence="6">
    <location>
        <begin position="38"/>
        <end position="43"/>
    </location>
</feature>
<feature type="helix" evidence="6">
    <location>
        <begin position="49"/>
        <end position="58"/>
    </location>
</feature>
<feature type="helix" evidence="6">
    <location>
        <begin position="65"/>
        <end position="67"/>
    </location>
</feature>
<feature type="strand" evidence="6">
    <location>
        <begin position="68"/>
        <end position="70"/>
    </location>
</feature>
<feature type="helix" evidence="6">
    <location>
        <begin position="71"/>
        <end position="80"/>
    </location>
</feature>
<feature type="strand" evidence="6">
    <location>
        <begin position="86"/>
        <end position="90"/>
    </location>
</feature>
<feature type="helix" evidence="6">
    <location>
        <begin position="94"/>
        <end position="101"/>
    </location>
</feature>
<feature type="strand" evidence="6">
    <location>
        <begin position="108"/>
        <end position="110"/>
    </location>
</feature>
<feature type="strand" evidence="6">
    <location>
        <begin position="112"/>
        <end position="116"/>
    </location>
</feature>
<feature type="helix" evidence="6">
    <location>
        <begin position="124"/>
        <end position="135"/>
    </location>
</feature>
<feature type="strand" evidence="6">
    <location>
        <begin position="139"/>
        <end position="143"/>
    </location>
</feature>
<feature type="strand" evidence="6">
    <location>
        <begin position="147"/>
        <end position="150"/>
    </location>
</feature>
<feature type="helix" evidence="6">
    <location>
        <begin position="156"/>
        <end position="167"/>
    </location>
</feature>
<feature type="helix" evidence="6">
    <location>
        <begin position="180"/>
        <end position="189"/>
    </location>
</feature>
<feature type="helix" evidence="6">
    <location>
        <begin position="193"/>
        <end position="195"/>
    </location>
</feature>
<feature type="strand" evidence="6">
    <location>
        <begin position="196"/>
        <end position="201"/>
    </location>
</feature>
<feature type="turn" evidence="6">
    <location>
        <begin position="203"/>
        <end position="205"/>
    </location>
</feature>
<feature type="helix" evidence="6">
    <location>
        <begin position="206"/>
        <end position="212"/>
    </location>
</feature>
<feature type="strand" evidence="6">
    <location>
        <begin position="216"/>
        <end position="224"/>
    </location>
</feature>
<feature type="helix" evidence="6">
    <location>
        <begin position="227"/>
        <end position="230"/>
    </location>
</feature>
<feature type="strand" evidence="6">
    <location>
        <begin position="238"/>
        <end position="243"/>
    </location>
</feature>
<feature type="helix" evidence="6">
    <location>
        <begin position="244"/>
        <end position="246"/>
    </location>
</feature>
<reference key="1">
    <citation type="journal article" date="1989" name="Mol. Microbiol.">
        <title>Sequence of the nagBACD operon in Escherichia coli K12 and pattern of transcription within the nag regulon.</title>
        <authorList>
            <person name="Plumbridge J."/>
        </authorList>
    </citation>
    <scope>NUCLEOTIDE SEQUENCE [GENOMIC DNA]</scope>
    <source>
        <strain>K12</strain>
    </source>
</reference>
<reference key="2">
    <citation type="journal article" date="1990" name="Biochem. Cell Biol.">
        <title>Cloning and characterization of the N-acetylglucosamine operon of Escherichia coli.</title>
        <authorList>
            <person name="Peri K.G."/>
            <person name="Goldie H."/>
            <person name="Waygood E.B."/>
        </authorList>
    </citation>
    <scope>NUCLEOTIDE SEQUENCE [GENOMIC DNA]</scope>
    <source>
        <strain>K12</strain>
    </source>
</reference>
<reference key="3">
    <citation type="journal article" date="1996" name="DNA Res.">
        <title>A 718-kb DNA sequence of the Escherichia coli K-12 genome corresponding to the 12.7-28.0 min region on the linkage map.</title>
        <authorList>
            <person name="Oshima T."/>
            <person name="Aiba H."/>
            <person name="Baba T."/>
            <person name="Fujita K."/>
            <person name="Hayashi K."/>
            <person name="Honjo A."/>
            <person name="Ikemoto K."/>
            <person name="Inada T."/>
            <person name="Itoh T."/>
            <person name="Kajihara M."/>
            <person name="Kanai K."/>
            <person name="Kashimoto K."/>
            <person name="Kimura S."/>
            <person name="Kitagawa M."/>
            <person name="Makino K."/>
            <person name="Masuda S."/>
            <person name="Miki T."/>
            <person name="Mizobuchi K."/>
            <person name="Mori H."/>
            <person name="Motomura K."/>
            <person name="Nakamura Y."/>
            <person name="Nashimoto H."/>
            <person name="Nishio Y."/>
            <person name="Saito N."/>
            <person name="Sampei G."/>
            <person name="Seki Y."/>
            <person name="Tagami H."/>
            <person name="Takemoto K."/>
            <person name="Wada C."/>
            <person name="Yamamoto Y."/>
            <person name="Yano M."/>
            <person name="Horiuchi T."/>
        </authorList>
    </citation>
    <scope>NUCLEOTIDE SEQUENCE [LARGE SCALE GENOMIC DNA]</scope>
    <source>
        <strain>K12 / W3110 / ATCC 27325 / DSM 5911</strain>
    </source>
</reference>
<reference key="4">
    <citation type="journal article" date="1997" name="Science">
        <title>The complete genome sequence of Escherichia coli K-12.</title>
        <authorList>
            <person name="Blattner F.R."/>
            <person name="Plunkett G. III"/>
            <person name="Bloch C.A."/>
            <person name="Perna N.T."/>
            <person name="Burland V."/>
            <person name="Riley M."/>
            <person name="Collado-Vides J."/>
            <person name="Glasner J.D."/>
            <person name="Rode C.K."/>
            <person name="Mayhew G.F."/>
            <person name="Gregor J."/>
            <person name="Davis N.W."/>
            <person name="Kirkpatrick H.A."/>
            <person name="Goeden M.A."/>
            <person name="Rose D.J."/>
            <person name="Mau B."/>
            <person name="Shao Y."/>
        </authorList>
    </citation>
    <scope>NUCLEOTIDE SEQUENCE [LARGE SCALE GENOMIC DNA]</scope>
    <source>
        <strain>K12 / MG1655 / ATCC 47076</strain>
    </source>
</reference>
<reference key="5">
    <citation type="journal article" date="2006" name="Mol. Syst. Biol.">
        <title>Highly accurate genome sequences of Escherichia coli K-12 strains MG1655 and W3110.</title>
        <authorList>
            <person name="Hayashi K."/>
            <person name="Morooka N."/>
            <person name="Yamamoto Y."/>
            <person name="Fujita K."/>
            <person name="Isono K."/>
            <person name="Choi S."/>
            <person name="Ohtsubo E."/>
            <person name="Baba T."/>
            <person name="Wanner B.L."/>
            <person name="Mori H."/>
            <person name="Horiuchi T."/>
        </authorList>
    </citation>
    <scope>NUCLEOTIDE SEQUENCE [LARGE SCALE GENOMIC DNA]</scope>
    <source>
        <strain>K12 / W3110 / ATCC 27325 / DSM 5911</strain>
    </source>
</reference>
<reference key="6">
    <citation type="journal article" date="2006" name="J. Biol. Chem.">
        <title>Genome-wide analysis of substrate specificities of the Escherichia coli haloacid dehalogenase-like phosphatase family.</title>
        <authorList>
            <person name="Kuznetsova E."/>
            <person name="Proudfoot M."/>
            <person name="Gonzalez C.F."/>
            <person name="Brown G."/>
            <person name="Omelchenko M.V."/>
            <person name="Borozan I."/>
            <person name="Carmel L."/>
            <person name="Wolf Y.I."/>
            <person name="Mori H."/>
            <person name="Savchenko A.V."/>
            <person name="Arrowsmith C.H."/>
            <person name="Koonin E.V."/>
            <person name="Edwards A.M."/>
            <person name="Yakunin A.F."/>
        </authorList>
    </citation>
    <scope>FUNCTION AS A PHOSPHATASE</scope>
    <scope>SUBSTRATE SPECIFICITY</scope>
    <scope>COFACTOR</scope>
</reference>
<reference key="7">
    <citation type="journal article" date="2006" name="Biochemistry">
        <title>Structure and activity analyses of Escherichia coli K-12 NagD provide insight into the evolution of biochemical function in the haloalkanoic acid dehalogenase superfamily.</title>
        <authorList>
            <person name="Tremblay L.W."/>
            <person name="Dunaway-Mariano D."/>
            <person name="Allen K.N."/>
        </authorList>
    </citation>
    <scope>X-RAY CRYSTALLOGRAPHY (1.8 ANGSTROMS) IN COMPLEX WITH MAGNESIUM IONS</scope>
    <scope>FUNCTION AS A RIBONUCLEOTIDE MONOPHOSPHATASE</scope>
    <scope>CATALYTIC ACTIVITY</scope>
    <scope>BIOPHYSICOCHEMICAL PROPERTIES</scope>
    <scope>COFACTOR</scope>
    <scope>SUBUNIT</scope>
</reference>
<keyword id="KW-0002">3D-structure</keyword>
<keyword id="KW-0119">Carbohydrate metabolism</keyword>
<keyword id="KW-0378">Hydrolase</keyword>
<keyword id="KW-0460">Magnesium</keyword>
<keyword id="KW-0479">Metal-binding</keyword>
<keyword id="KW-1185">Reference proteome</keyword>
<gene>
    <name type="primary">nagD</name>
    <name type="ordered locus">b0675</name>
    <name type="ordered locus">JW0661</name>
</gene>
<protein>
    <recommendedName>
        <fullName>Ribonucleotide monophosphatase NagD</fullName>
        <ecNumber evidence="1">3.1.3.5</ecNumber>
    </recommendedName>
</protein>
<evidence type="ECO:0000269" key="1">
    <source>
    </source>
</evidence>
<evidence type="ECO:0000269" key="2">
    <source>
    </source>
</evidence>
<evidence type="ECO:0000305" key="3"/>
<evidence type="ECO:0000305" key="4">
    <source>
    </source>
</evidence>
<evidence type="ECO:0007744" key="5">
    <source>
        <dbReference type="PDB" id="2C4N"/>
    </source>
</evidence>
<evidence type="ECO:0007829" key="6">
    <source>
        <dbReference type="PDB" id="2C4N"/>
    </source>
</evidence>
<dbReference type="EC" id="3.1.3.5" evidence="1"/>
<dbReference type="EMBL" id="X14135">
    <property type="protein sequence ID" value="CAA32355.1"/>
    <property type="molecule type" value="Genomic_DNA"/>
</dbReference>
<dbReference type="EMBL" id="AF052007">
    <property type="protein sequence ID" value="AAC09327.1"/>
    <property type="molecule type" value="Genomic_DNA"/>
</dbReference>
<dbReference type="EMBL" id="U00096">
    <property type="protein sequence ID" value="AAC73769.1"/>
    <property type="molecule type" value="Genomic_DNA"/>
</dbReference>
<dbReference type="EMBL" id="AP009048">
    <property type="protein sequence ID" value="BAA35318.1"/>
    <property type="molecule type" value="Genomic_DNA"/>
</dbReference>
<dbReference type="PIR" id="B64802">
    <property type="entry name" value="B64802"/>
</dbReference>
<dbReference type="RefSeq" id="NP_415201.1">
    <property type="nucleotide sequence ID" value="NC_000913.3"/>
</dbReference>
<dbReference type="RefSeq" id="WP_000153129.1">
    <property type="nucleotide sequence ID" value="NZ_STEB01000044.1"/>
</dbReference>
<dbReference type="PDB" id="2C4N">
    <property type="method" value="X-ray"/>
    <property type="resolution" value="1.80 A"/>
    <property type="chains" value="A=1-250"/>
</dbReference>
<dbReference type="PDBsum" id="2C4N"/>
<dbReference type="SMR" id="P0AF24"/>
<dbReference type="BioGRID" id="4259613">
    <property type="interactions" value="15"/>
</dbReference>
<dbReference type="DIP" id="DIP-6861N"/>
<dbReference type="FunCoup" id="P0AF24">
    <property type="interactions" value="694"/>
</dbReference>
<dbReference type="IntAct" id="P0AF24">
    <property type="interactions" value="4"/>
</dbReference>
<dbReference type="STRING" id="511145.b0675"/>
<dbReference type="jPOST" id="P0AF24"/>
<dbReference type="PaxDb" id="511145-b0675"/>
<dbReference type="EnsemblBacteria" id="AAC73769">
    <property type="protein sequence ID" value="AAC73769"/>
    <property type="gene ID" value="b0675"/>
</dbReference>
<dbReference type="GeneID" id="93776810"/>
<dbReference type="GeneID" id="945283"/>
<dbReference type="KEGG" id="ecj:JW0661"/>
<dbReference type="KEGG" id="eco:b0675"/>
<dbReference type="PATRIC" id="fig|511145.12.peg.700"/>
<dbReference type="EchoBASE" id="EB0628"/>
<dbReference type="eggNOG" id="COG0647">
    <property type="taxonomic scope" value="Bacteria"/>
</dbReference>
<dbReference type="HOGENOM" id="CLU_043473_1_1_6"/>
<dbReference type="InParanoid" id="P0AF24"/>
<dbReference type="OMA" id="PPMHRET"/>
<dbReference type="PhylomeDB" id="P0AF24"/>
<dbReference type="BioCyc" id="EcoCyc:EG10634-MONOMER"/>
<dbReference type="BioCyc" id="MetaCyc:EG10634-MONOMER"/>
<dbReference type="EvolutionaryTrace" id="P0AF24"/>
<dbReference type="PRO" id="PR:P0AF24"/>
<dbReference type="Proteomes" id="UP000000625">
    <property type="component" value="Chromosome"/>
</dbReference>
<dbReference type="GO" id="GO:0005737">
    <property type="term" value="C:cytoplasm"/>
    <property type="evidence" value="ECO:0000318"/>
    <property type="project" value="GO_Central"/>
</dbReference>
<dbReference type="GO" id="GO:0005829">
    <property type="term" value="C:cytosol"/>
    <property type="evidence" value="ECO:0000314"/>
    <property type="project" value="EcoCyc"/>
</dbReference>
<dbReference type="GO" id="GO:0008253">
    <property type="term" value="F:5'-nucleotidase activity"/>
    <property type="evidence" value="ECO:0000314"/>
    <property type="project" value="UniProtKB"/>
</dbReference>
<dbReference type="GO" id="GO:0000287">
    <property type="term" value="F:magnesium ion binding"/>
    <property type="evidence" value="ECO:0000314"/>
    <property type="project" value="UniProtKB"/>
</dbReference>
<dbReference type="GO" id="GO:0016791">
    <property type="term" value="F:phosphatase activity"/>
    <property type="evidence" value="ECO:0000318"/>
    <property type="project" value="GO_Central"/>
</dbReference>
<dbReference type="GO" id="GO:0046050">
    <property type="term" value="P:UMP catabolic process"/>
    <property type="evidence" value="ECO:0000315"/>
    <property type="project" value="EcoCyc"/>
</dbReference>
<dbReference type="CDD" id="cd07530">
    <property type="entry name" value="HAD_Pase_UmpH-like"/>
    <property type="match status" value="1"/>
</dbReference>
<dbReference type="FunFam" id="3.40.50.1000:FF:000016">
    <property type="entry name" value="HAD family hydrolase"/>
    <property type="match status" value="1"/>
</dbReference>
<dbReference type="Gene3D" id="3.40.50.1000">
    <property type="entry name" value="HAD superfamily/HAD-like"/>
    <property type="match status" value="2"/>
</dbReference>
<dbReference type="InterPro" id="IPR036412">
    <property type="entry name" value="HAD-like_sf"/>
</dbReference>
<dbReference type="InterPro" id="IPR006357">
    <property type="entry name" value="HAD-SF_hydro_IIA"/>
</dbReference>
<dbReference type="InterPro" id="IPR023214">
    <property type="entry name" value="HAD_sf"/>
</dbReference>
<dbReference type="NCBIfam" id="TIGR01460">
    <property type="entry name" value="HAD-SF-IIA"/>
    <property type="match status" value="1"/>
</dbReference>
<dbReference type="NCBIfam" id="NF007762">
    <property type="entry name" value="PRK10444.1"/>
    <property type="match status" value="1"/>
</dbReference>
<dbReference type="PANTHER" id="PTHR19288">
    <property type="entry name" value="4-NITROPHENYLPHOSPHATASE-RELATED"/>
    <property type="match status" value="1"/>
</dbReference>
<dbReference type="PANTHER" id="PTHR19288:SF46">
    <property type="entry name" value="HALOACID DEHALOGENASE-LIKE HYDROLASE DOMAIN-CONTAINING PROTEIN 2"/>
    <property type="match status" value="1"/>
</dbReference>
<dbReference type="Pfam" id="PF13344">
    <property type="entry name" value="Hydrolase_6"/>
    <property type="match status" value="1"/>
</dbReference>
<dbReference type="Pfam" id="PF13242">
    <property type="entry name" value="Hydrolase_like"/>
    <property type="match status" value="1"/>
</dbReference>
<dbReference type="SFLD" id="SFLDG01139">
    <property type="entry name" value="C2.A:_Pyridoxal_Phosphate_Phos"/>
    <property type="match status" value="1"/>
</dbReference>
<dbReference type="SFLD" id="SFLDS00003">
    <property type="entry name" value="Haloacid_Dehalogenase"/>
    <property type="match status" value="1"/>
</dbReference>
<dbReference type="SUPFAM" id="SSF56784">
    <property type="entry name" value="HAD-like"/>
    <property type="match status" value="1"/>
</dbReference>
<name>NAGD_ECOLI</name>
<organism>
    <name type="scientific">Escherichia coli (strain K12)</name>
    <dbReference type="NCBI Taxonomy" id="83333"/>
    <lineage>
        <taxon>Bacteria</taxon>
        <taxon>Pseudomonadati</taxon>
        <taxon>Pseudomonadota</taxon>
        <taxon>Gammaproteobacteria</taxon>
        <taxon>Enterobacterales</taxon>
        <taxon>Enterobacteriaceae</taxon>
        <taxon>Escherichia</taxon>
    </lineage>
</organism>
<accession>P0AF24</accession>
<accession>P15302</accession>